<gene>
    <name evidence="1" type="primary">ccmA</name>
    <name type="ordered locus">RC1228</name>
</gene>
<proteinExistence type="inferred from homology"/>
<organism>
    <name type="scientific">Rickettsia conorii (strain ATCC VR-613 / Malish 7)</name>
    <dbReference type="NCBI Taxonomy" id="272944"/>
    <lineage>
        <taxon>Bacteria</taxon>
        <taxon>Pseudomonadati</taxon>
        <taxon>Pseudomonadota</taxon>
        <taxon>Alphaproteobacteria</taxon>
        <taxon>Rickettsiales</taxon>
        <taxon>Rickettsiaceae</taxon>
        <taxon>Rickettsieae</taxon>
        <taxon>Rickettsia</taxon>
        <taxon>spotted fever group</taxon>
    </lineage>
</organism>
<name>CCMA_RICCN</name>
<evidence type="ECO:0000255" key="1">
    <source>
        <dbReference type="HAMAP-Rule" id="MF_01707"/>
    </source>
</evidence>
<evidence type="ECO:0000305" key="2"/>
<feature type="chain" id="PRO_0000092206" description="Cytochrome c biogenesis ATP-binding export protein CcmA">
    <location>
        <begin position="1"/>
        <end position="191"/>
    </location>
</feature>
<feature type="domain" description="ABC transporter" evidence="1">
    <location>
        <begin position="2"/>
        <end position="190"/>
    </location>
</feature>
<feature type="binding site" evidence="1">
    <location>
        <begin position="29"/>
        <end position="36"/>
    </location>
    <ligand>
        <name>ATP</name>
        <dbReference type="ChEBI" id="CHEBI:30616"/>
    </ligand>
</feature>
<comment type="function">
    <text evidence="1">Part of the ABC transporter complex CcmAB involved in the biogenesis of c-type cytochromes; once thought to export heme, this seems not to be the case, but its exact role is uncertain. Responsible for energy coupling to the transport system.</text>
</comment>
<comment type="catalytic activity">
    <reaction evidence="1">
        <text>heme b(in) + ATP + H2O = heme b(out) + ADP + phosphate + H(+)</text>
        <dbReference type="Rhea" id="RHEA:19261"/>
        <dbReference type="ChEBI" id="CHEBI:15377"/>
        <dbReference type="ChEBI" id="CHEBI:15378"/>
        <dbReference type="ChEBI" id="CHEBI:30616"/>
        <dbReference type="ChEBI" id="CHEBI:43474"/>
        <dbReference type="ChEBI" id="CHEBI:60344"/>
        <dbReference type="ChEBI" id="CHEBI:456216"/>
        <dbReference type="EC" id="7.6.2.5"/>
    </reaction>
</comment>
<comment type="subunit">
    <text evidence="1">The complex is composed of two ATP-binding proteins (CcmA) and two transmembrane proteins (CcmB).</text>
</comment>
<comment type="subcellular location">
    <subcellularLocation>
        <location evidence="1">Cell inner membrane</location>
        <topology evidence="1">Peripheral membrane protein</topology>
    </subcellularLocation>
</comment>
<comment type="similarity">
    <text evidence="1">Belongs to the ABC transporter superfamily. CcmA exporter (TC 3.A.1.107) family.</text>
</comment>
<comment type="sequence caution" evidence="2">
    <conflict type="erroneous initiation">
        <sequence resource="EMBL-CDS" id="AAL03766"/>
    </conflict>
</comment>
<keyword id="KW-0067">ATP-binding</keyword>
<keyword id="KW-0997">Cell inner membrane</keyword>
<keyword id="KW-1003">Cell membrane</keyword>
<keyword id="KW-0201">Cytochrome c-type biogenesis</keyword>
<keyword id="KW-0472">Membrane</keyword>
<keyword id="KW-0547">Nucleotide-binding</keyword>
<keyword id="KW-1278">Translocase</keyword>
<keyword id="KW-0813">Transport</keyword>
<protein>
    <recommendedName>
        <fullName evidence="1">Cytochrome c biogenesis ATP-binding export protein CcmA</fullName>
        <ecNumber evidence="1">7.6.2.5</ecNumber>
    </recommendedName>
    <alternativeName>
        <fullName evidence="1">Heme exporter protein A</fullName>
    </alternativeName>
</protein>
<sequence>MLSLHQLQFKNLFDLNITFLPSSITYIKGANGCGKSSLLRMIAGIMQPSSGHIYYRNCNINNIAKLYCTYIGHNLGLKSEMTVFENLKFWSEIYNSAATVYAAIHYFKLHDLLDKKCYSLSSGMQKIVAIARLIACQSDLWLLDEVETNLSKENRALLNNLIVMKANSGGIVLLSSHLESSIKSAQILRID</sequence>
<dbReference type="EC" id="7.6.2.5" evidence="1"/>
<dbReference type="EMBL" id="AE006914">
    <property type="protein sequence ID" value="AAL03766.1"/>
    <property type="status" value="ALT_INIT"/>
    <property type="molecule type" value="Genomic_DNA"/>
</dbReference>
<dbReference type="PIR" id="D97853">
    <property type="entry name" value="D97853"/>
</dbReference>
<dbReference type="SMR" id="Q92G95"/>
<dbReference type="KEGG" id="rco:RC1228"/>
<dbReference type="PATRIC" id="fig|272944.4.peg.1407"/>
<dbReference type="HOGENOM" id="CLU_000604_1_2_5"/>
<dbReference type="Proteomes" id="UP000000816">
    <property type="component" value="Chromosome"/>
</dbReference>
<dbReference type="GO" id="GO:0005886">
    <property type="term" value="C:plasma membrane"/>
    <property type="evidence" value="ECO:0007669"/>
    <property type="project" value="UniProtKB-SubCell"/>
</dbReference>
<dbReference type="GO" id="GO:0015439">
    <property type="term" value="F:ABC-type heme transporter activity"/>
    <property type="evidence" value="ECO:0007669"/>
    <property type="project" value="UniProtKB-EC"/>
</dbReference>
<dbReference type="GO" id="GO:0005524">
    <property type="term" value="F:ATP binding"/>
    <property type="evidence" value="ECO:0007669"/>
    <property type="project" value="UniProtKB-KW"/>
</dbReference>
<dbReference type="GO" id="GO:0016887">
    <property type="term" value="F:ATP hydrolysis activity"/>
    <property type="evidence" value="ECO:0007669"/>
    <property type="project" value="InterPro"/>
</dbReference>
<dbReference type="GO" id="GO:0017004">
    <property type="term" value="P:cytochrome complex assembly"/>
    <property type="evidence" value="ECO:0007669"/>
    <property type="project" value="UniProtKB-KW"/>
</dbReference>
<dbReference type="Gene3D" id="3.40.50.300">
    <property type="entry name" value="P-loop containing nucleotide triphosphate hydrolases"/>
    <property type="match status" value="1"/>
</dbReference>
<dbReference type="InterPro" id="IPR003593">
    <property type="entry name" value="AAA+_ATPase"/>
</dbReference>
<dbReference type="InterPro" id="IPR003439">
    <property type="entry name" value="ABC_transporter-like_ATP-bd"/>
</dbReference>
<dbReference type="InterPro" id="IPR005895">
    <property type="entry name" value="ABC_transptr_haem_export_CcmA"/>
</dbReference>
<dbReference type="InterPro" id="IPR027417">
    <property type="entry name" value="P-loop_NTPase"/>
</dbReference>
<dbReference type="NCBIfam" id="TIGR01189">
    <property type="entry name" value="ccmA"/>
    <property type="match status" value="1"/>
</dbReference>
<dbReference type="NCBIfam" id="NF010063">
    <property type="entry name" value="PRK13541.1"/>
    <property type="match status" value="1"/>
</dbReference>
<dbReference type="PANTHER" id="PTHR43499">
    <property type="entry name" value="ABC TRANSPORTER I FAMILY MEMBER 1"/>
    <property type="match status" value="1"/>
</dbReference>
<dbReference type="PANTHER" id="PTHR43499:SF1">
    <property type="entry name" value="ABC TRANSPORTER I FAMILY MEMBER 1"/>
    <property type="match status" value="1"/>
</dbReference>
<dbReference type="Pfam" id="PF00005">
    <property type="entry name" value="ABC_tran"/>
    <property type="match status" value="1"/>
</dbReference>
<dbReference type="SMART" id="SM00382">
    <property type="entry name" value="AAA"/>
    <property type="match status" value="1"/>
</dbReference>
<dbReference type="SUPFAM" id="SSF52540">
    <property type="entry name" value="P-loop containing nucleoside triphosphate hydrolases"/>
    <property type="match status" value="1"/>
</dbReference>
<dbReference type="PROSITE" id="PS50893">
    <property type="entry name" value="ABC_TRANSPORTER_2"/>
    <property type="match status" value="1"/>
</dbReference>
<dbReference type="PROSITE" id="PS51243">
    <property type="entry name" value="CCMA"/>
    <property type="match status" value="1"/>
</dbReference>
<accession>Q92G95</accession>
<reference key="1">
    <citation type="journal article" date="2001" name="Science">
        <title>Mechanisms of evolution in Rickettsia conorii and R. prowazekii.</title>
        <authorList>
            <person name="Ogata H."/>
            <person name="Audic S."/>
            <person name="Renesto-Audiffren P."/>
            <person name="Fournier P.-E."/>
            <person name="Barbe V."/>
            <person name="Samson D."/>
            <person name="Roux V."/>
            <person name="Cossart P."/>
            <person name="Weissenbach J."/>
            <person name="Claverie J.-M."/>
            <person name="Raoult D."/>
        </authorList>
    </citation>
    <scope>NUCLEOTIDE SEQUENCE [LARGE SCALE GENOMIC DNA]</scope>
    <source>
        <strain>ATCC VR-613 / Malish 7</strain>
    </source>
</reference>